<accession>A7KAI2</accession>
<comment type="function">
    <text evidence="1 2">E2 conjugating enzyme required for the cytoplasm to vacuole transport (Cvt) and autophagy. Required for selective autophagic degradation of the nucleus (nucleophagy) as well as for mitophagy which contributes to regulate mitochondrial quantity and quality by eliminating the mitochondria to a basal level to fulfill cellular energy requirements and preventing excess ROS production. Responsible for the E2-like covalent binding of phosphatidylethanolamine to the C-terminal Gly of ATG8. The ATG12-ATG5 conjugate plays a role of an E3 and promotes the transfer of ATG8 from ATG3 to phosphatidylethanolamine (PE). This step is required for the membrane association of ATG8. The formation of the ATG8-phosphatidylethanolamine conjugate is essential for autophagy and for the cytoplasm to vacuole transport (Cvt). The ATG8-PE conjugate mediates tethering between adjacent membranes and stimulates membrane hemifusion, leading to expansion of the autophagosomal membrane during autophagy (By similarity).</text>
</comment>
<comment type="subunit">
    <text evidence="1">Monomer. Interacts with ATG8 through an intermediate thioester bond through the C-terminal Gly of ATG8. Also interacts with the 40 amino acid C-terminal region of the E1-like ATG7 enzyme. Also interacts with the ATG12-ATG5 conjugate.</text>
</comment>
<comment type="subcellular location">
    <subcellularLocation>
        <location evidence="1">Cytoplasm</location>
    </subcellularLocation>
</comment>
<comment type="domain">
    <text evidence="1">The N-terminal region is involved in phosphatidylethanolamine-binding and is required for ATG8-PE conjugation.</text>
</comment>
<comment type="domain">
    <text evidence="1">The flexible region (FR) is required for ATG7-binding.</text>
</comment>
<comment type="domain">
    <text evidence="1">The handle region (HR) contains the ATG8 interaction motif (AIM) and mediates binding to ATG8. It is crucial for the cytoplasm-to-vacuole targeting pathway (By similarity).</text>
</comment>
<comment type="similarity">
    <text evidence="3">Belongs to the ATG3 family.</text>
</comment>
<proteinExistence type="inferred from homology"/>
<sequence length="339" mass="38371">MTGLYLRSTFSSLREYLTPISHKSTFTDTGEITPEEFVAAGDYLVYKFPTWQWSPAPESKKRDFLPNDKQFLVTRHVPSYVRAADYEHTEKEAEMMEEEDGWTSTNVDSVAPQRCNTEDERRHSIKYIEMTESGASSPEEGLAQHEGSGKHEINDIDELIDETAEESDLANDAGQGGIINDPKKRNYDLYITYSTSYRVPKMYLVGFNSNGVPLSPNEMFEDIASDYRQKTVTIEKAPFLSNTTSVSIHPCRHANVMRVLMKRAAHAAQAKKIRDKDLVTGVAKLGLADGKNADEEDDWENVEQGEEGIIRVDQYLVIFLKFIASVTPGIEYDYTMDAF</sequence>
<feature type="chain" id="PRO_0000317826" description="Autophagy-related protein 3">
    <location>
        <begin position="1"/>
        <end position="339"/>
    </location>
</feature>
<feature type="region of interest" description="Flexible region" evidence="1">
    <location>
        <begin position="86"/>
        <end position="182"/>
    </location>
</feature>
<feature type="region of interest" description="Handle region" evidence="1">
    <location>
        <begin position="255"/>
        <end position="314"/>
    </location>
</feature>
<feature type="active site" description="Glycyl thioester intermediate" evidence="1">
    <location>
        <position position="251"/>
    </location>
</feature>
<keyword id="KW-0072">Autophagy</keyword>
<keyword id="KW-0963">Cytoplasm</keyword>
<keyword id="KW-0653">Protein transport</keyword>
<keyword id="KW-0813">Transport</keyword>
<keyword id="KW-0833">Ubl conjugation pathway</keyword>
<protein>
    <recommendedName>
        <fullName>Autophagy-related protein 3</fullName>
    </recommendedName>
    <alternativeName>
        <fullName>Autophagy-related E2-like conjugation enzyme ATG3</fullName>
    </alternativeName>
</protein>
<reference key="1">
    <citation type="journal article" date="2007" name="Autophagy">
        <title>ATG genes involved in non-selective autophagy are conserved from yeast to man, but the selective Cvt and pexophagy pathways also require organism-specific genes.</title>
        <authorList>
            <person name="Meijer W.H."/>
            <person name="van der Klei I.J."/>
            <person name="Veenhuis M."/>
            <person name="Kiel J.A.K.W."/>
        </authorList>
    </citation>
    <scope>NUCLEOTIDE SEQUENCE [GENOMIC DNA]</scope>
    <scope>FUNCTION</scope>
    <source>
        <strain>ATCC 34438 / CBS 4732 / DSM 70277 / JCM 3621 / NBRC 1476 / NRRL Y-5445</strain>
    </source>
</reference>
<dbReference type="EMBL" id="EF102883">
    <property type="protein sequence ID" value="ABO31287.1"/>
    <property type="molecule type" value="Genomic_DNA"/>
</dbReference>
<dbReference type="SMR" id="A7KAI2"/>
<dbReference type="GO" id="GO:0005829">
    <property type="term" value="C:cytosol"/>
    <property type="evidence" value="ECO:0007669"/>
    <property type="project" value="TreeGrafter"/>
</dbReference>
<dbReference type="GO" id="GO:0000407">
    <property type="term" value="C:phagophore assembly site"/>
    <property type="evidence" value="ECO:0007669"/>
    <property type="project" value="TreeGrafter"/>
</dbReference>
<dbReference type="GO" id="GO:0019776">
    <property type="term" value="F:Atg8-family ligase activity"/>
    <property type="evidence" value="ECO:0007669"/>
    <property type="project" value="TreeGrafter"/>
</dbReference>
<dbReference type="GO" id="GO:0000045">
    <property type="term" value="P:autophagosome assembly"/>
    <property type="evidence" value="ECO:0007669"/>
    <property type="project" value="TreeGrafter"/>
</dbReference>
<dbReference type="GO" id="GO:0000422">
    <property type="term" value="P:autophagy of mitochondrion"/>
    <property type="evidence" value="ECO:0007669"/>
    <property type="project" value="TreeGrafter"/>
</dbReference>
<dbReference type="GO" id="GO:0061723">
    <property type="term" value="P:glycophagy"/>
    <property type="evidence" value="ECO:0007669"/>
    <property type="project" value="TreeGrafter"/>
</dbReference>
<dbReference type="GO" id="GO:0044804">
    <property type="term" value="P:nucleophagy"/>
    <property type="evidence" value="ECO:0007669"/>
    <property type="project" value="TreeGrafter"/>
</dbReference>
<dbReference type="GO" id="GO:0015031">
    <property type="term" value="P:protein transport"/>
    <property type="evidence" value="ECO:0007669"/>
    <property type="project" value="UniProtKB-KW"/>
</dbReference>
<dbReference type="Gene3D" id="3.30.1460.50">
    <property type="match status" value="1"/>
</dbReference>
<dbReference type="InterPro" id="IPR007135">
    <property type="entry name" value="Atg3/Atg10"/>
</dbReference>
<dbReference type="PANTHER" id="PTHR12866">
    <property type="entry name" value="UBIQUITIN-LIKE-CONJUGATING ENZYME ATG3"/>
    <property type="match status" value="1"/>
</dbReference>
<dbReference type="PANTHER" id="PTHR12866:SF2">
    <property type="entry name" value="UBIQUITIN-LIKE-CONJUGATING ENZYME ATG3"/>
    <property type="match status" value="1"/>
</dbReference>
<dbReference type="Pfam" id="PF03987">
    <property type="entry name" value="Autophagy_act_C"/>
    <property type="match status" value="1"/>
</dbReference>
<evidence type="ECO:0000250" key="1"/>
<evidence type="ECO:0000269" key="2">
    <source>
    </source>
</evidence>
<evidence type="ECO:0000305" key="3"/>
<organism>
    <name type="scientific">Pichia angusta</name>
    <name type="common">Yeast</name>
    <name type="synonym">Hansenula polymorpha</name>
    <dbReference type="NCBI Taxonomy" id="870730"/>
    <lineage>
        <taxon>Eukaryota</taxon>
        <taxon>Fungi</taxon>
        <taxon>Dikarya</taxon>
        <taxon>Ascomycota</taxon>
        <taxon>Saccharomycotina</taxon>
        <taxon>Pichiomycetes</taxon>
        <taxon>Pichiales</taxon>
        <taxon>Pichiaceae</taxon>
        <taxon>Ogataea</taxon>
    </lineage>
</organism>
<name>ATG3_PICAN</name>
<gene>
    <name type="primary">ATG3</name>
</gene>